<sequence>MIGILLLIGICVAVTVAILYTLYNKIKNPQNPNPSPNLNSPPPETRNTKFVNNLEKDHISSLYNLVKSSA</sequence>
<accession>P0DTN1</accession>
<name>PG139_MONPV</name>
<feature type="chain" id="PRO_0000457510" description="Virion membrane protein OPG139">
    <location>
        <begin position="1"/>
        <end position="70"/>
    </location>
</feature>
<feature type="transmembrane region" description="Helical" evidence="2">
    <location>
        <begin position="2"/>
        <end position="22"/>
    </location>
</feature>
<feature type="topological domain" description="Virion surface" evidence="2">
    <location>
        <begin position="23"/>
        <end position="68"/>
    </location>
</feature>
<feature type="region of interest" description="Disordered" evidence="3">
    <location>
        <begin position="27"/>
        <end position="49"/>
    </location>
</feature>
<feature type="compositionally biased region" description="Pro residues" evidence="3">
    <location>
        <begin position="31"/>
        <end position="44"/>
    </location>
</feature>
<reference key="1">
    <citation type="journal article" date="2013" name="Am. J. Trop. Med. Hyg.">
        <title>Detection of human monkeypox in the republic of the congo following intensive community education.</title>
        <authorList>
            <person name="Reynolds M.G."/>
            <person name="Emerson G.L."/>
            <person name="Pukuta E."/>
            <person name="Karhemere S."/>
            <person name="Muyembe J.J."/>
            <person name="Bikindou A."/>
            <person name="McCollum A.M."/>
            <person name="Moses C."/>
            <person name="Wilkins K."/>
            <person name="Zhao H."/>
            <person name="Damon I.K."/>
            <person name="Karem K.L."/>
            <person name="Li Y."/>
            <person name="Carroll D.S."/>
            <person name="Mombouli J.V."/>
        </authorList>
    </citation>
    <scope>NUCLEOTIDE SEQUENCE [GENOMIC DNA]</scope>
    <source>
        <strain>ROC2010</strain>
    </source>
</reference>
<reference key="2">
    <citation type="journal article" date="2022" name="J. Infect. Dis.">
        <title>Exportation of Monkeypox virus from the African continent.</title>
        <authorList>
            <person name="Mauldin M.R."/>
            <person name="McCollum A.M."/>
            <person name="Nakazawa Y.J."/>
            <person name="Mandra A."/>
            <person name="Whitehouse E.R."/>
            <person name="Davidson W."/>
            <person name="Zhao H."/>
            <person name="Gao J."/>
            <person name="Li Y."/>
            <person name="Doty J."/>
            <person name="Yinka-Ogunleye A."/>
            <person name="Akinpelu A."/>
            <person name="Aruna O."/>
            <person name="Naidoo D."/>
            <person name="Lewandowski K."/>
            <person name="Afrough B."/>
            <person name="Graham V."/>
            <person name="Aarons E."/>
            <person name="Hewson R."/>
            <person name="Vipond R."/>
            <person name="Dunning J."/>
            <person name="Chand M."/>
            <person name="Brown C."/>
            <person name="Cohen-Gihon I."/>
            <person name="Erez N."/>
            <person name="Shifman O."/>
            <person name="Israeli O."/>
            <person name="Sharon M."/>
            <person name="Schwartz E."/>
            <person name="Beth-Din A."/>
            <person name="Zvi A."/>
            <person name="Mak T.M."/>
            <person name="Ng Y.K."/>
            <person name="Cui L."/>
            <person name="Lin R.T.P."/>
            <person name="Olson V.A."/>
            <person name="Brooks T."/>
            <person name="Paran N."/>
            <person name="Ihekweazu C."/>
            <person name="Reynolds M.G."/>
        </authorList>
    </citation>
    <scope>NUCLEOTIDE SEQUENCE [LARGE SCALE GENOMIC DNA]</scope>
    <source>
        <strain>MPXV-M5312_HM12_Rivers</strain>
    </source>
</reference>
<protein>
    <recommendedName>
        <fullName>Virion membrane protein OPG139</fullName>
    </recommendedName>
</protein>
<organism>
    <name type="scientific">Monkeypox virus</name>
    <dbReference type="NCBI Taxonomy" id="10244"/>
    <lineage>
        <taxon>Viruses</taxon>
        <taxon>Varidnaviria</taxon>
        <taxon>Bamfordvirae</taxon>
        <taxon>Nucleocytoviricota</taxon>
        <taxon>Pokkesviricetes</taxon>
        <taxon>Chitovirales</taxon>
        <taxon>Poxviridae</taxon>
        <taxon>Chordopoxvirinae</taxon>
        <taxon>Orthopoxvirus</taxon>
    </lineage>
</organism>
<comment type="function">
    <text evidence="1">Essential for the encapsidation of DNA into immature virions (IV) and the subsequent maturation of IV into mature virions (MV).</text>
</comment>
<comment type="subcellular location">
    <subcellularLocation>
        <location evidence="1">Virion membrane</location>
        <topology evidence="1">Single-pass membrane protein</topology>
    </subcellularLocation>
    <text evidence="1">Component of the mature virion (MV) membrane. The mature virion is located in the cytoplasm of infected cells and is probably released by cell lysis.</text>
</comment>
<comment type="PTM">
    <text evidence="1">Phosphorylated by a OPG054-independent mechanism.</text>
</comment>
<comment type="similarity">
    <text evidence="4">Belongs to the orthopoxvirus OPG139 family.</text>
</comment>
<gene>
    <name type="primary">OPG139</name>
    <name type="ORF">MPXVgp124</name>
</gene>
<keyword id="KW-0426">Late protein</keyword>
<keyword id="KW-0472">Membrane</keyword>
<keyword id="KW-1185">Reference proteome</keyword>
<keyword id="KW-0812">Transmembrane</keyword>
<keyword id="KW-1133">Transmembrane helix</keyword>
<keyword id="KW-0946">Virion</keyword>
<dbReference type="EMBL" id="MT903340">
    <property type="status" value="NOT_ANNOTATED_CDS"/>
    <property type="molecule type" value="Genomic_DNA"/>
</dbReference>
<dbReference type="RefSeq" id="NP_536551.1">
    <property type="nucleotide sequence ID" value="NC_003310.1"/>
</dbReference>
<dbReference type="RefSeq" id="YP_010377121.1">
    <property type="nucleotide sequence ID" value="NC_063383.1"/>
</dbReference>
<dbReference type="SMR" id="P0DTN1"/>
<dbReference type="GeneID" id="72551534"/>
<dbReference type="GeneID" id="929001"/>
<dbReference type="Proteomes" id="UP000516359">
    <property type="component" value="Genome"/>
</dbReference>
<dbReference type="GO" id="GO:0016020">
    <property type="term" value="C:membrane"/>
    <property type="evidence" value="ECO:0007669"/>
    <property type="project" value="UniProtKB-KW"/>
</dbReference>
<dbReference type="GO" id="GO:0055036">
    <property type="term" value="C:virion membrane"/>
    <property type="evidence" value="ECO:0007669"/>
    <property type="project" value="UniProtKB-SubCell"/>
</dbReference>
<dbReference type="InterPro" id="IPR009236">
    <property type="entry name" value="Chordopox_A13L"/>
</dbReference>
<dbReference type="Pfam" id="PF05961">
    <property type="entry name" value="Chordopox_A13L"/>
    <property type="match status" value="1"/>
</dbReference>
<evidence type="ECO:0000250" key="1">
    <source>
        <dbReference type="UniProtKB" id="Q76ZQ4"/>
    </source>
</evidence>
<evidence type="ECO:0000255" key="2"/>
<evidence type="ECO:0000256" key="3">
    <source>
        <dbReference type="SAM" id="MobiDB-lite"/>
    </source>
</evidence>
<evidence type="ECO:0000305" key="4"/>
<proteinExistence type="inferred from homology"/>
<organismHost>
    <name type="scientific">Cynomys gunnisoni</name>
    <name type="common">Gunnison's prairie dog</name>
    <name type="synonym">Spermophilus gunnisoni</name>
    <dbReference type="NCBI Taxonomy" id="45479"/>
</organismHost>
<organismHost>
    <name type="scientific">Cynomys leucurus</name>
    <name type="common">White-tailed prairie dog</name>
    <dbReference type="NCBI Taxonomy" id="99825"/>
</organismHost>
<organismHost>
    <name type="scientific">Cynomys ludovicianus</name>
    <name type="common">Black-tailed prairie dog</name>
    <dbReference type="NCBI Taxonomy" id="45480"/>
</organismHost>
<organismHost>
    <name type="scientific">Cynomys mexicanus</name>
    <name type="common">Mexican prairie dog</name>
    <dbReference type="NCBI Taxonomy" id="99826"/>
</organismHost>
<organismHost>
    <name type="scientific">Cynomys parvidens</name>
    <name type="common">Utah prairie dog</name>
    <dbReference type="NCBI Taxonomy" id="99827"/>
</organismHost>
<organismHost>
    <name type="scientific">Gliridae</name>
    <name type="common">dormice</name>
    <dbReference type="NCBI Taxonomy" id="30650"/>
</organismHost>
<organismHost>
    <name type="scientific">Heliosciurus ruwenzorii</name>
    <name type="common">Ruwenzori sun squirrel</name>
    <dbReference type="NCBI Taxonomy" id="226685"/>
</organismHost>
<organismHost>
    <name type="scientific">Homo sapiens</name>
    <name type="common">Human</name>
    <dbReference type="NCBI Taxonomy" id="9606"/>
</organismHost>
<organismHost>
    <name type="scientific">Mus musculus</name>
    <name type="common">Mouse</name>
    <dbReference type="NCBI Taxonomy" id="10090"/>
</organismHost>